<proteinExistence type="inferred from homology"/>
<dbReference type="EMBL" id="AE013218">
    <property type="protein sequence ID" value="AAM67807.1"/>
    <property type="molecule type" value="Genomic_DNA"/>
</dbReference>
<dbReference type="RefSeq" id="WP_011053774.1">
    <property type="nucleotide sequence ID" value="NC_004061.1"/>
</dbReference>
<dbReference type="SMR" id="Q8K9R2"/>
<dbReference type="STRING" id="198804.BUsg_248"/>
<dbReference type="GeneID" id="93003718"/>
<dbReference type="KEGG" id="bas:BUsg_248"/>
<dbReference type="eggNOG" id="COG1159">
    <property type="taxonomic scope" value="Bacteria"/>
</dbReference>
<dbReference type="HOGENOM" id="CLU_038009_1_2_6"/>
<dbReference type="Proteomes" id="UP000000416">
    <property type="component" value="Chromosome"/>
</dbReference>
<dbReference type="GO" id="GO:0005829">
    <property type="term" value="C:cytosol"/>
    <property type="evidence" value="ECO:0007669"/>
    <property type="project" value="TreeGrafter"/>
</dbReference>
<dbReference type="GO" id="GO:0005886">
    <property type="term" value="C:plasma membrane"/>
    <property type="evidence" value="ECO:0007669"/>
    <property type="project" value="UniProtKB-SubCell"/>
</dbReference>
<dbReference type="GO" id="GO:0005525">
    <property type="term" value="F:GTP binding"/>
    <property type="evidence" value="ECO:0007669"/>
    <property type="project" value="UniProtKB-UniRule"/>
</dbReference>
<dbReference type="GO" id="GO:0003924">
    <property type="term" value="F:GTPase activity"/>
    <property type="evidence" value="ECO:0007669"/>
    <property type="project" value="UniProtKB-UniRule"/>
</dbReference>
<dbReference type="GO" id="GO:0043024">
    <property type="term" value="F:ribosomal small subunit binding"/>
    <property type="evidence" value="ECO:0007669"/>
    <property type="project" value="TreeGrafter"/>
</dbReference>
<dbReference type="GO" id="GO:0070181">
    <property type="term" value="F:small ribosomal subunit rRNA binding"/>
    <property type="evidence" value="ECO:0007669"/>
    <property type="project" value="UniProtKB-UniRule"/>
</dbReference>
<dbReference type="GO" id="GO:0000028">
    <property type="term" value="P:ribosomal small subunit assembly"/>
    <property type="evidence" value="ECO:0007669"/>
    <property type="project" value="TreeGrafter"/>
</dbReference>
<dbReference type="CDD" id="cd04163">
    <property type="entry name" value="Era"/>
    <property type="match status" value="1"/>
</dbReference>
<dbReference type="CDD" id="cd22534">
    <property type="entry name" value="KH-II_Era"/>
    <property type="match status" value="1"/>
</dbReference>
<dbReference type="Gene3D" id="3.30.300.20">
    <property type="match status" value="1"/>
</dbReference>
<dbReference type="Gene3D" id="3.40.50.300">
    <property type="entry name" value="P-loop containing nucleotide triphosphate hydrolases"/>
    <property type="match status" value="1"/>
</dbReference>
<dbReference type="HAMAP" id="MF_00367">
    <property type="entry name" value="GTPase_Era"/>
    <property type="match status" value="1"/>
</dbReference>
<dbReference type="InterPro" id="IPR030388">
    <property type="entry name" value="G_ERA_dom"/>
</dbReference>
<dbReference type="InterPro" id="IPR006073">
    <property type="entry name" value="GTP-bd"/>
</dbReference>
<dbReference type="InterPro" id="IPR005662">
    <property type="entry name" value="GTPase_Era-like"/>
</dbReference>
<dbReference type="InterPro" id="IPR015946">
    <property type="entry name" value="KH_dom-like_a/b"/>
</dbReference>
<dbReference type="InterPro" id="IPR004044">
    <property type="entry name" value="KH_dom_type_2"/>
</dbReference>
<dbReference type="InterPro" id="IPR009019">
    <property type="entry name" value="KH_sf_prok-type"/>
</dbReference>
<dbReference type="InterPro" id="IPR027417">
    <property type="entry name" value="P-loop_NTPase"/>
</dbReference>
<dbReference type="InterPro" id="IPR005225">
    <property type="entry name" value="Small_GTP-bd"/>
</dbReference>
<dbReference type="NCBIfam" id="TIGR00436">
    <property type="entry name" value="era"/>
    <property type="match status" value="1"/>
</dbReference>
<dbReference type="NCBIfam" id="NF000908">
    <property type="entry name" value="PRK00089.1"/>
    <property type="match status" value="1"/>
</dbReference>
<dbReference type="NCBIfam" id="TIGR00231">
    <property type="entry name" value="small_GTP"/>
    <property type="match status" value="1"/>
</dbReference>
<dbReference type="PANTHER" id="PTHR42698">
    <property type="entry name" value="GTPASE ERA"/>
    <property type="match status" value="1"/>
</dbReference>
<dbReference type="PANTHER" id="PTHR42698:SF1">
    <property type="entry name" value="GTPASE ERA, MITOCHONDRIAL"/>
    <property type="match status" value="1"/>
</dbReference>
<dbReference type="Pfam" id="PF07650">
    <property type="entry name" value="KH_2"/>
    <property type="match status" value="1"/>
</dbReference>
<dbReference type="Pfam" id="PF01926">
    <property type="entry name" value="MMR_HSR1"/>
    <property type="match status" value="1"/>
</dbReference>
<dbReference type="PRINTS" id="PR00326">
    <property type="entry name" value="GTP1OBG"/>
</dbReference>
<dbReference type="SUPFAM" id="SSF52540">
    <property type="entry name" value="P-loop containing nucleoside triphosphate hydrolases"/>
    <property type="match status" value="1"/>
</dbReference>
<dbReference type="SUPFAM" id="SSF54814">
    <property type="entry name" value="Prokaryotic type KH domain (KH-domain type II)"/>
    <property type="match status" value="1"/>
</dbReference>
<dbReference type="PROSITE" id="PS51713">
    <property type="entry name" value="G_ERA"/>
    <property type="match status" value="1"/>
</dbReference>
<dbReference type="PROSITE" id="PS50823">
    <property type="entry name" value="KH_TYPE_2"/>
    <property type="match status" value="1"/>
</dbReference>
<sequence length="278" mass="32487">MKKRKQYCGYIAIVGKPNVGKSTLINEIIENEISITSKKKNTTQKNILGIKTKQLHQFIYVDTPGIYLNNEKDDSFKIIKSSILILFIVDRTVWKTDDEIVLNKIKKNKIPIICVINKIDKILDKSIILPHINFLLKKINPIEIIPISAKKRENIVLLENLIYPYLPNNNHIFPKKYITTHSLSFSISEIIRQKLIFFLRDELPSIITVKIESIEEKFKKKLYIRAAIYVKHERQKKIIIGKKAEGIKKISIASRLDIEKKINMKIYLIIWVKVKIKK</sequence>
<evidence type="ECO:0000255" key="1">
    <source>
        <dbReference type="HAMAP-Rule" id="MF_00367"/>
    </source>
</evidence>
<evidence type="ECO:0000255" key="2">
    <source>
        <dbReference type="PROSITE-ProRule" id="PRU01050"/>
    </source>
</evidence>
<name>ERA_BUCAP</name>
<accession>Q8K9R2</accession>
<keyword id="KW-1003">Cell membrane</keyword>
<keyword id="KW-0963">Cytoplasm</keyword>
<keyword id="KW-0342">GTP-binding</keyword>
<keyword id="KW-0472">Membrane</keyword>
<keyword id="KW-0547">Nucleotide-binding</keyword>
<keyword id="KW-0690">Ribosome biogenesis</keyword>
<keyword id="KW-0694">RNA-binding</keyword>
<keyword id="KW-0699">rRNA-binding</keyword>
<reference key="1">
    <citation type="journal article" date="2002" name="Science">
        <title>50 million years of genomic stasis in endosymbiotic bacteria.</title>
        <authorList>
            <person name="Tamas I."/>
            <person name="Klasson L."/>
            <person name="Canbaeck B."/>
            <person name="Naeslund A.K."/>
            <person name="Eriksson A.-S."/>
            <person name="Wernegreen J.J."/>
            <person name="Sandstroem J.P."/>
            <person name="Moran N.A."/>
            <person name="Andersson S.G.E."/>
        </authorList>
    </citation>
    <scope>NUCLEOTIDE SEQUENCE [LARGE SCALE GENOMIC DNA]</scope>
    <source>
        <strain>Sg</strain>
    </source>
</reference>
<feature type="chain" id="PRO_0000180003" description="GTPase Era">
    <location>
        <begin position="1"/>
        <end position="278"/>
    </location>
</feature>
<feature type="domain" description="Era-type G" evidence="2">
    <location>
        <begin position="7"/>
        <end position="168"/>
    </location>
</feature>
<feature type="domain" description="KH type-2" evidence="1">
    <location>
        <begin position="199"/>
        <end position="276"/>
    </location>
</feature>
<feature type="region of interest" description="G1" evidence="2">
    <location>
        <begin position="15"/>
        <end position="22"/>
    </location>
</feature>
<feature type="region of interest" description="G2" evidence="2">
    <location>
        <begin position="41"/>
        <end position="45"/>
    </location>
</feature>
<feature type="region of interest" description="G3" evidence="2">
    <location>
        <begin position="62"/>
        <end position="65"/>
    </location>
</feature>
<feature type="region of interest" description="G4" evidence="2">
    <location>
        <begin position="117"/>
        <end position="120"/>
    </location>
</feature>
<feature type="region of interest" description="G5" evidence="2">
    <location>
        <begin position="147"/>
        <end position="149"/>
    </location>
</feature>
<feature type="binding site" evidence="1">
    <location>
        <begin position="15"/>
        <end position="22"/>
    </location>
    <ligand>
        <name>GTP</name>
        <dbReference type="ChEBI" id="CHEBI:37565"/>
    </ligand>
</feature>
<feature type="binding site" evidence="1">
    <location>
        <begin position="62"/>
        <end position="66"/>
    </location>
    <ligand>
        <name>GTP</name>
        <dbReference type="ChEBI" id="CHEBI:37565"/>
    </ligand>
</feature>
<feature type="binding site" evidence="1">
    <location>
        <begin position="117"/>
        <end position="120"/>
    </location>
    <ligand>
        <name>GTP</name>
        <dbReference type="ChEBI" id="CHEBI:37565"/>
    </ligand>
</feature>
<comment type="function">
    <text evidence="1">An essential GTPase that binds both GDP and GTP, with rapid nucleotide exchange. Plays a role in 16S rRNA processing and 30S ribosomal subunit biogenesis and possibly also in cell cycle regulation and energy metabolism.</text>
</comment>
<comment type="subunit">
    <text evidence="1">Monomer.</text>
</comment>
<comment type="subcellular location">
    <subcellularLocation>
        <location>Cytoplasm</location>
    </subcellularLocation>
    <subcellularLocation>
        <location evidence="1">Cell membrane</location>
        <topology evidence="1">Peripheral membrane protein</topology>
    </subcellularLocation>
</comment>
<comment type="similarity">
    <text evidence="1 2">Belongs to the TRAFAC class TrmE-Era-EngA-EngB-Septin-like GTPase superfamily. Era GTPase family.</text>
</comment>
<organism>
    <name type="scientific">Buchnera aphidicola subsp. Schizaphis graminum (strain Sg)</name>
    <dbReference type="NCBI Taxonomy" id="198804"/>
    <lineage>
        <taxon>Bacteria</taxon>
        <taxon>Pseudomonadati</taxon>
        <taxon>Pseudomonadota</taxon>
        <taxon>Gammaproteobacteria</taxon>
        <taxon>Enterobacterales</taxon>
        <taxon>Erwiniaceae</taxon>
        <taxon>Buchnera</taxon>
    </lineage>
</organism>
<protein>
    <recommendedName>
        <fullName evidence="1">GTPase Era</fullName>
    </recommendedName>
</protein>
<gene>
    <name evidence="1" type="primary">era</name>
    <name type="ordered locus">BUsg_248</name>
</gene>